<feature type="chain" id="PRO_0000132601" description="Small ribosomal subunit protein uS4c">
    <location>
        <begin position="1"/>
        <end position="196" status="greater than"/>
    </location>
</feature>
<feature type="domain" description="S4 RNA-binding">
    <location>
        <begin position="89"/>
        <end position="157"/>
    </location>
</feature>
<feature type="non-terminal residue">
    <location>
        <position position="196"/>
    </location>
</feature>
<accession>P69644</accession>
<accession>P36457</accession>
<accession>P36460</accession>
<protein>
    <recommendedName>
        <fullName evidence="2">Small ribosomal subunit protein uS4c</fullName>
    </recommendedName>
    <alternativeName>
        <fullName>30S ribosomal protein S4, chloroplastic</fullName>
    </alternativeName>
</protein>
<keyword id="KW-0150">Chloroplast</keyword>
<keyword id="KW-0934">Plastid</keyword>
<keyword id="KW-0687">Ribonucleoprotein</keyword>
<keyword id="KW-0689">Ribosomal protein</keyword>
<keyword id="KW-0694">RNA-binding</keyword>
<keyword id="KW-0699">rRNA-binding</keyword>
<proteinExistence type="inferred from homology"/>
<gene>
    <name type="primary">rps4</name>
</gene>
<evidence type="ECO:0000250" key="1"/>
<evidence type="ECO:0000305" key="2"/>
<organism>
    <name type="scientific">Hordeum marinum</name>
    <name type="common">Seaside barley</name>
    <dbReference type="NCBI Taxonomy" id="4519"/>
    <lineage>
        <taxon>Eukaryota</taxon>
        <taxon>Viridiplantae</taxon>
        <taxon>Streptophyta</taxon>
        <taxon>Embryophyta</taxon>
        <taxon>Tracheophyta</taxon>
        <taxon>Spermatophyta</taxon>
        <taxon>Magnoliopsida</taxon>
        <taxon>Liliopsida</taxon>
        <taxon>Poales</taxon>
        <taxon>Poaceae</taxon>
        <taxon>BOP clade</taxon>
        <taxon>Pooideae</taxon>
        <taxon>Triticodae</taxon>
        <taxon>Triticeae</taxon>
        <taxon>Hordeinae</taxon>
        <taxon>Hordeum</taxon>
    </lineage>
</organism>
<name>RR4_HORMA</name>
<sequence>MSRYRGPRLKKIRRLGALPGLTRKTPKSGSNLKKKFNSGKKEQYRIRLQEKQKLRFHYGLTERQLLRYVHIAGKAKRSTGQVLLQLLEMRLDNILFRLGMASTIPGARQLVNHRHILVNGRIVNIPSFRCKPRDIITTKDNQRSKGLVQNYIASSDPGKLPKHLTIDTLEYKGLVNKILDRKWVGLKINELLVVEY</sequence>
<reference key="1">
    <citation type="journal article" date="1994" name="Plant Syst. Evol.">
        <title>The chloroplast gene rps4 as a tool for the study of Poaceae phylogeny.</title>
        <authorList>
            <person name="Nadot S."/>
            <person name="Bajon R."/>
            <person name="Lejeune B."/>
        </authorList>
        <dbReference type="AGRICOLA" id="IND20417698"/>
    </citation>
    <scope>NUCLEOTIDE SEQUENCE [GENOMIC DNA]</scope>
</reference>
<dbReference type="EMBL" id="Z29241">
    <property type="protein sequence ID" value="CAA82440.1"/>
    <property type="molecule type" value="Genomic_DNA"/>
</dbReference>
<dbReference type="SMR" id="P69644"/>
<dbReference type="GO" id="GO:0009507">
    <property type="term" value="C:chloroplast"/>
    <property type="evidence" value="ECO:0007669"/>
    <property type="project" value="UniProtKB-SubCell"/>
</dbReference>
<dbReference type="GO" id="GO:0015935">
    <property type="term" value="C:small ribosomal subunit"/>
    <property type="evidence" value="ECO:0007669"/>
    <property type="project" value="InterPro"/>
</dbReference>
<dbReference type="GO" id="GO:0019843">
    <property type="term" value="F:rRNA binding"/>
    <property type="evidence" value="ECO:0007669"/>
    <property type="project" value="UniProtKB-KW"/>
</dbReference>
<dbReference type="GO" id="GO:0003735">
    <property type="term" value="F:structural constituent of ribosome"/>
    <property type="evidence" value="ECO:0007669"/>
    <property type="project" value="InterPro"/>
</dbReference>
<dbReference type="GO" id="GO:0042274">
    <property type="term" value="P:ribosomal small subunit biogenesis"/>
    <property type="evidence" value="ECO:0007669"/>
    <property type="project" value="TreeGrafter"/>
</dbReference>
<dbReference type="GO" id="GO:0006412">
    <property type="term" value="P:translation"/>
    <property type="evidence" value="ECO:0007669"/>
    <property type="project" value="InterPro"/>
</dbReference>
<dbReference type="CDD" id="cd00165">
    <property type="entry name" value="S4"/>
    <property type="match status" value="1"/>
</dbReference>
<dbReference type="FunFam" id="1.10.1050.10:FF:000002">
    <property type="entry name" value="30S ribosomal protein S4, chloroplastic"/>
    <property type="match status" value="1"/>
</dbReference>
<dbReference type="FunFam" id="3.10.290.10:FF:000081">
    <property type="entry name" value="30S ribosomal protein S4, chloroplastic"/>
    <property type="match status" value="1"/>
</dbReference>
<dbReference type="Gene3D" id="1.10.1050.10">
    <property type="entry name" value="Ribosomal Protein S4 Delta 41, Chain A, domain 1"/>
    <property type="match status" value="1"/>
</dbReference>
<dbReference type="Gene3D" id="3.10.290.10">
    <property type="entry name" value="RNA-binding S4 domain"/>
    <property type="match status" value="1"/>
</dbReference>
<dbReference type="HAMAP" id="MF_01306_B">
    <property type="entry name" value="Ribosomal_uS4_B"/>
    <property type="match status" value="1"/>
</dbReference>
<dbReference type="InterPro" id="IPR022801">
    <property type="entry name" value="Ribosomal_uS4"/>
</dbReference>
<dbReference type="InterPro" id="IPR005709">
    <property type="entry name" value="Ribosomal_uS4_bac-type"/>
</dbReference>
<dbReference type="InterPro" id="IPR018079">
    <property type="entry name" value="Ribosomal_uS4_CS"/>
</dbReference>
<dbReference type="InterPro" id="IPR001912">
    <property type="entry name" value="Ribosomal_uS4_N"/>
</dbReference>
<dbReference type="InterPro" id="IPR002942">
    <property type="entry name" value="S4_RNA-bd"/>
</dbReference>
<dbReference type="InterPro" id="IPR036986">
    <property type="entry name" value="S4_RNA-bd_sf"/>
</dbReference>
<dbReference type="NCBIfam" id="NF003717">
    <property type="entry name" value="PRK05327.1"/>
    <property type="match status" value="1"/>
</dbReference>
<dbReference type="NCBIfam" id="TIGR01017">
    <property type="entry name" value="rpsD_bact"/>
    <property type="match status" value="1"/>
</dbReference>
<dbReference type="PANTHER" id="PTHR11831">
    <property type="entry name" value="30S 40S RIBOSOMAL PROTEIN"/>
    <property type="match status" value="1"/>
</dbReference>
<dbReference type="PANTHER" id="PTHR11831:SF4">
    <property type="entry name" value="SMALL RIBOSOMAL SUBUNIT PROTEIN US4M"/>
    <property type="match status" value="1"/>
</dbReference>
<dbReference type="Pfam" id="PF00163">
    <property type="entry name" value="Ribosomal_S4"/>
    <property type="match status" value="1"/>
</dbReference>
<dbReference type="Pfam" id="PF01479">
    <property type="entry name" value="S4"/>
    <property type="match status" value="1"/>
</dbReference>
<dbReference type="SMART" id="SM01390">
    <property type="entry name" value="Ribosomal_S4"/>
    <property type="match status" value="1"/>
</dbReference>
<dbReference type="SMART" id="SM00363">
    <property type="entry name" value="S4"/>
    <property type="match status" value="1"/>
</dbReference>
<dbReference type="SUPFAM" id="SSF55174">
    <property type="entry name" value="Alpha-L RNA-binding motif"/>
    <property type="match status" value="1"/>
</dbReference>
<dbReference type="PROSITE" id="PS00632">
    <property type="entry name" value="RIBOSOMAL_S4"/>
    <property type="match status" value="1"/>
</dbReference>
<dbReference type="PROSITE" id="PS50889">
    <property type="entry name" value="S4"/>
    <property type="match status" value="1"/>
</dbReference>
<geneLocation type="chloroplast"/>
<comment type="function">
    <text evidence="1">One of the primary rRNA binding proteins, it binds directly to 16S rRNA where it nucleates assembly of the body of the 30S subunit.</text>
</comment>
<comment type="function">
    <text evidence="1">With S5 and S12 plays an important role in translational accuracy.</text>
</comment>
<comment type="subunit">
    <text evidence="1">Part of the 30S ribosomal subunit. Contacts protein S5. The interaction surface between S4 and S5 is involved in control of translational fidelity (By similarity).</text>
</comment>
<comment type="subcellular location">
    <subcellularLocation>
        <location>Plastid</location>
        <location>Chloroplast</location>
    </subcellularLocation>
</comment>
<comment type="similarity">
    <text evidence="2">Belongs to the universal ribosomal protein uS4 family.</text>
</comment>